<protein>
    <recommendedName>
        <fullName>ADP-ribosylation factor 3</fullName>
    </recommendedName>
</protein>
<proteinExistence type="evidence at transcript level"/>
<evidence type="ECO:0000250" key="1"/>
<evidence type="ECO:0000255" key="2"/>
<evidence type="ECO:0000305" key="3"/>
<accession>Q5E9I6</accession>
<accession>Q0VCG1</accession>
<comment type="function">
    <text evidence="1">GTP-binding protein that functions as an allosteric activator of the cholera toxin catalytic subunit, an ADP-ribosyltransferase. Involved in protein trafficking; may modulate vesicle budding and uncoating within the Golgi apparatus (By similarity).</text>
</comment>
<comment type="subunit">
    <text evidence="1">Interacts with PRKCABP. Interacts with PI4KB and NCS1/FREQ at the Golgi complex.</text>
</comment>
<comment type="subcellular location">
    <subcellularLocation>
        <location evidence="1">Golgi apparatus</location>
    </subcellularLocation>
    <subcellularLocation>
        <location evidence="1">Cytoplasm</location>
        <location evidence="1">Perinuclear region</location>
    </subcellularLocation>
</comment>
<comment type="similarity">
    <text evidence="3">Belongs to the small GTPase superfamily. Arf family.</text>
</comment>
<reference key="1">
    <citation type="journal article" date="2005" name="BMC Genomics">
        <title>Characterization of 954 bovine full-CDS cDNA sequences.</title>
        <authorList>
            <person name="Harhay G.P."/>
            <person name="Sonstegard T.S."/>
            <person name="Keele J.W."/>
            <person name="Heaton M.P."/>
            <person name="Clawson M.L."/>
            <person name="Snelling W.M."/>
            <person name="Wiedmann R.T."/>
            <person name="Van Tassell C.P."/>
            <person name="Smith T.P.L."/>
        </authorList>
    </citation>
    <scope>NUCLEOTIDE SEQUENCE [LARGE SCALE MRNA]</scope>
</reference>
<reference key="2">
    <citation type="submission" date="2006-08" db="EMBL/GenBank/DDBJ databases">
        <authorList>
            <consortium name="NIH - Mammalian Gene Collection (MGC) project"/>
        </authorList>
    </citation>
    <scope>NUCLEOTIDE SEQUENCE [LARGE SCALE MRNA]</scope>
    <source>
        <strain>Hereford</strain>
        <tissue>Fetal cerebellum</tissue>
    </source>
</reference>
<dbReference type="EMBL" id="BT020934">
    <property type="protein sequence ID" value="AAX08951.1"/>
    <property type="molecule type" value="mRNA"/>
</dbReference>
<dbReference type="EMBL" id="BC120186">
    <property type="protein sequence ID" value="AAI20187.1"/>
    <property type="molecule type" value="mRNA"/>
</dbReference>
<dbReference type="RefSeq" id="NP_001015571.1">
    <property type="nucleotide sequence ID" value="NM_001015571.3"/>
</dbReference>
<dbReference type="SMR" id="Q5E9I6"/>
<dbReference type="FunCoup" id="Q5E9I6">
    <property type="interactions" value="3763"/>
</dbReference>
<dbReference type="STRING" id="9913.ENSBTAP00000066552"/>
<dbReference type="GeneID" id="510994"/>
<dbReference type="KEGG" id="bta:510994"/>
<dbReference type="CTD" id="377"/>
<dbReference type="VEuPathDB" id="HostDB:ENSBTAG00000051755"/>
<dbReference type="InParanoid" id="Q5E9I6"/>
<dbReference type="OMA" id="IRQRHWF"/>
<dbReference type="OrthoDB" id="2011769at2759"/>
<dbReference type="Reactome" id="R-BTA-1660514">
    <property type="pathway name" value="Synthesis of PIPs at the Golgi membrane"/>
</dbReference>
<dbReference type="Reactome" id="R-BTA-6807878">
    <property type="pathway name" value="COPI-mediated anterograde transport"/>
</dbReference>
<dbReference type="Reactome" id="R-BTA-6811434">
    <property type="pathway name" value="COPI-dependent Golgi-to-ER retrograde traffic"/>
</dbReference>
<dbReference type="Proteomes" id="UP000009136">
    <property type="component" value="Chromosome 5"/>
</dbReference>
<dbReference type="Bgee" id="ENSBTAG00000051755">
    <property type="expression patterns" value="Expressed in Ammon's horn and 103 other cell types or tissues"/>
</dbReference>
<dbReference type="GO" id="GO:0005737">
    <property type="term" value="C:cytoplasm"/>
    <property type="evidence" value="ECO:0000318"/>
    <property type="project" value="GO_Central"/>
</dbReference>
<dbReference type="GO" id="GO:0005794">
    <property type="term" value="C:Golgi apparatus"/>
    <property type="evidence" value="ECO:0007669"/>
    <property type="project" value="UniProtKB-SubCell"/>
</dbReference>
<dbReference type="GO" id="GO:0048471">
    <property type="term" value="C:perinuclear region of cytoplasm"/>
    <property type="evidence" value="ECO:0007669"/>
    <property type="project" value="UniProtKB-SubCell"/>
</dbReference>
<dbReference type="GO" id="GO:0005886">
    <property type="term" value="C:plasma membrane"/>
    <property type="evidence" value="ECO:0000318"/>
    <property type="project" value="GO_Central"/>
</dbReference>
<dbReference type="GO" id="GO:0005525">
    <property type="term" value="F:GTP binding"/>
    <property type="evidence" value="ECO:0000318"/>
    <property type="project" value="GO_Central"/>
</dbReference>
<dbReference type="GO" id="GO:0003924">
    <property type="term" value="F:GTPase activity"/>
    <property type="evidence" value="ECO:0007669"/>
    <property type="project" value="InterPro"/>
</dbReference>
<dbReference type="GO" id="GO:0006886">
    <property type="term" value="P:intracellular protein transport"/>
    <property type="evidence" value="ECO:0000318"/>
    <property type="project" value="GO_Central"/>
</dbReference>
<dbReference type="GO" id="GO:0016192">
    <property type="term" value="P:vesicle-mediated transport"/>
    <property type="evidence" value="ECO:0000318"/>
    <property type="project" value="GO_Central"/>
</dbReference>
<dbReference type="CDD" id="cd04150">
    <property type="entry name" value="Arf1_5_like"/>
    <property type="match status" value="1"/>
</dbReference>
<dbReference type="FunFam" id="3.40.50.300:FF:003500">
    <property type="entry name" value="ADP-ribosylation factor 1"/>
    <property type="match status" value="1"/>
</dbReference>
<dbReference type="Gene3D" id="3.40.50.300">
    <property type="entry name" value="P-loop containing nucleotide triphosphate hydrolases"/>
    <property type="match status" value="1"/>
</dbReference>
<dbReference type="InterPro" id="IPR045872">
    <property type="entry name" value="Arf1-5-like"/>
</dbReference>
<dbReference type="InterPro" id="IPR027417">
    <property type="entry name" value="P-loop_NTPase"/>
</dbReference>
<dbReference type="InterPro" id="IPR005225">
    <property type="entry name" value="Small_GTP-bd"/>
</dbReference>
<dbReference type="InterPro" id="IPR024156">
    <property type="entry name" value="Small_GTPase_ARF"/>
</dbReference>
<dbReference type="InterPro" id="IPR006689">
    <property type="entry name" value="Small_GTPase_ARF/SAR"/>
</dbReference>
<dbReference type="NCBIfam" id="TIGR00231">
    <property type="entry name" value="small_GTP"/>
    <property type="match status" value="1"/>
</dbReference>
<dbReference type="PANTHER" id="PTHR11711">
    <property type="entry name" value="ADP RIBOSYLATION FACTOR-RELATED"/>
    <property type="match status" value="1"/>
</dbReference>
<dbReference type="Pfam" id="PF00025">
    <property type="entry name" value="Arf"/>
    <property type="match status" value="1"/>
</dbReference>
<dbReference type="PRINTS" id="PR00328">
    <property type="entry name" value="SAR1GTPBP"/>
</dbReference>
<dbReference type="SMART" id="SM00177">
    <property type="entry name" value="ARF"/>
    <property type="match status" value="1"/>
</dbReference>
<dbReference type="SMART" id="SM00175">
    <property type="entry name" value="RAB"/>
    <property type="match status" value="1"/>
</dbReference>
<dbReference type="SMART" id="SM00178">
    <property type="entry name" value="SAR"/>
    <property type="match status" value="1"/>
</dbReference>
<dbReference type="SUPFAM" id="SSF52540">
    <property type="entry name" value="P-loop containing nucleoside triphosphate hydrolases"/>
    <property type="match status" value="1"/>
</dbReference>
<dbReference type="PROSITE" id="PS51417">
    <property type="entry name" value="ARF"/>
    <property type="match status" value="1"/>
</dbReference>
<name>ARF3_BOVIN</name>
<gene>
    <name type="primary">ARF3</name>
</gene>
<feature type="initiator methionine" description="Removed" evidence="2">
    <location>
        <position position="1"/>
    </location>
</feature>
<feature type="chain" id="PRO_0000245350" description="ADP-ribosylation factor 3">
    <location>
        <begin position="2"/>
        <end position="181"/>
    </location>
</feature>
<feature type="binding site" evidence="1">
    <location>
        <begin position="24"/>
        <end position="31"/>
    </location>
    <ligand>
        <name>GTP</name>
        <dbReference type="ChEBI" id="CHEBI:37565"/>
    </ligand>
</feature>
<feature type="binding site" evidence="1">
    <location>
        <begin position="67"/>
        <end position="71"/>
    </location>
    <ligand>
        <name>GTP</name>
        <dbReference type="ChEBI" id="CHEBI:37565"/>
    </ligand>
</feature>
<feature type="binding site" evidence="1">
    <location>
        <begin position="126"/>
        <end position="129"/>
    </location>
    <ligand>
        <name>GTP</name>
        <dbReference type="ChEBI" id="CHEBI:37565"/>
    </ligand>
</feature>
<feature type="lipid moiety-binding region" description="N-myristoyl glycine" evidence="2">
    <location>
        <position position="2"/>
    </location>
</feature>
<organism>
    <name type="scientific">Bos taurus</name>
    <name type="common">Bovine</name>
    <dbReference type="NCBI Taxonomy" id="9913"/>
    <lineage>
        <taxon>Eukaryota</taxon>
        <taxon>Metazoa</taxon>
        <taxon>Chordata</taxon>
        <taxon>Craniata</taxon>
        <taxon>Vertebrata</taxon>
        <taxon>Euteleostomi</taxon>
        <taxon>Mammalia</taxon>
        <taxon>Eutheria</taxon>
        <taxon>Laurasiatheria</taxon>
        <taxon>Artiodactyla</taxon>
        <taxon>Ruminantia</taxon>
        <taxon>Pecora</taxon>
        <taxon>Bovidae</taxon>
        <taxon>Bovinae</taxon>
        <taxon>Bos</taxon>
    </lineage>
</organism>
<sequence>MGNIFGNLLKSLIGKKEMRILMVGLDAAGKTTILYKLKLGEIVTTIPTIGFNVETVEYKNISFTVWDVGGQDKIRPLWRHYFQNTQGLIFVVDSNDRERVNEAREELMRMLAEDELRDAVLLVFANKQDLPNAMNAAEITDKLGLHSLRHRNWYIQATCATSGDGLYEGLDWLANQLKNKK</sequence>
<keyword id="KW-0963">Cytoplasm</keyword>
<keyword id="KW-0931">ER-Golgi transport</keyword>
<keyword id="KW-0333">Golgi apparatus</keyword>
<keyword id="KW-0342">GTP-binding</keyword>
<keyword id="KW-0449">Lipoprotein</keyword>
<keyword id="KW-0519">Myristate</keyword>
<keyword id="KW-0547">Nucleotide-binding</keyword>
<keyword id="KW-0653">Protein transport</keyword>
<keyword id="KW-1185">Reference proteome</keyword>
<keyword id="KW-0813">Transport</keyword>